<keyword id="KW-0030">Aminoacyl-tRNA synthetase</keyword>
<keyword id="KW-0067">ATP-binding</keyword>
<keyword id="KW-0963">Cytoplasm</keyword>
<keyword id="KW-0436">Ligase</keyword>
<keyword id="KW-0460">Magnesium</keyword>
<keyword id="KW-0479">Metal-binding</keyword>
<keyword id="KW-0547">Nucleotide-binding</keyword>
<keyword id="KW-0648">Protein biosynthesis</keyword>
<keyword id="KW-1185">Reference proteome</keyword>
<keyword id="KW-0694">RNA-binding</keyword>
<keyword id="KW-0820">tRNA-binding</keyword>
<gene>
    <name evidence="1" type="primary">pheT</name>
    <name type="ordered locus">Cgl1390</name>
    <name type="ordered locus">cg1575</name>
</gene>
<comment type="catalytic activity">
    <reaction evidence="1">
        <text>tRNA(Phe) + L-phenylalanine + ATP = L-phenylalanyl-tRNA(Phe) + AMP + diphosphate + H(+)</text>
        <dbReference type="Rhea" id="RHEA:19413"/>
        <dbReference type="Rhea" id="RHEA-COMP:9668"/>
        <dbReference type="Rhea" id="RHEA-COMP:9699"/>
        <dbReference type="ChEBI" id="CHEBI:15378"/>
        <dbReference type="ChEBI" id="CHEBI:30616"/>
        <dbReference type="ChEBI" id="CHEBI:33019"/>
        <dbReference type="ChEBI" id="CHEBI:58095"/>
        <dbReference type="ChEBI" id="CHEBI:78442"/>
        <dbReference type="ChEBI" id="CHEBI:78531"/>
        <dbReference type="ChEBI" id="CHEBI:456215"/>
        <dbReference type="EC" id="6.1.1.20"/>
    </reaction>
</comment>
<comment type="cofactor">
    <cofactor evidence="1">
        <name>Mg(2+)</name>
        <dbReference type="ChEBI" id="CHEBI:18420"/>
    </cofactor>
    <text evidence="1">Binds 2 magnesium ions per tetramer.</text>
</comment>
<comment type="subunit">
    <text evidence="1">Tetramer of two alpha and two beta subunits.</text>
</comment>
<comment type="subcellular location">
    <subcellularLocation>
        <location evidence="1">Cytoplasm</location>
    </subcellularLocation>
</comment>
<comment type="similarity">
    <text evidence="1">Belongs to the phenylalanyl-tRNA synthetase beta subunit family. Type 1 subfamily.</text>
</comment>
<comment type="sequence caution" evidence="2">
    <conflict type="erroneous initiation">
        <sequence resource="EMBL-CDS" id="BAB98783"/>
    </conflict>
</comment>
<sequence length="835" mass="89436">MLIAQNWVTGLLGHANEGWKVPSSDLDSGYVRVGFETEGYWPIPETTGPLVFGRVETIEELTEFKKPIRHCHVNVGDANGTGELQSIVCGARNFKEGDTVVVSLPGAVLPGDFAISARETYGRMSAGMICSASELGLADKQNSGIITLDPSYGEPGEDARQALGLEDTVFDVNVTPDRGYALSARGLTRELASAFSLTFTDPAIEPAVAGIEVKVPAVEGSLINVELREETKAIRFGLRKVSGIDPAAESPFWMQRELMLSGQRPVNAATDVTNYVMLLLGQPMHAFDAAKVTGDLVVRNATAGEKFETLDHVKRTLNEEDVVITDDNGIQSLAGVMGGLTSEISDTTTDVYFEAATWDTITVARTSRRHKLSSEASRRFERGVDPAIVEIALDIAATLLVEIAGGTVDAGRTLVGDVPAMQPITMKVTRPSELAGVDYSAETVIARLEEVGCTVAVSGDTLEVTPPTWRGDLTMSADLVEEVLRLEGLEAIPTIIPTAPAGRGLTDAQKRRRAVGHALAYAGYAEIIPSPFMDPEVFDVWGLAADDERRKTVSVLNPLEAERNVLSTSLLPSMLDAVKRNVARGHNDFSLFGLQQVAFEHGSGVSPMPSVASRPEESVVAELVDSLPNQPLHVATVGTGNIEFEGPWGKGRAYTFADAIESARAVARAAGVTLELANADALPWHPGRCAALLIDGTPVGYAGELHPQILEKAGLPARTCAMELDLSALPLVENLPAPVLSSFPALHQDIALVVDETIPAEDVRAVVEAGAGELIETVELFDVYRSEQLGENKKSLAFSLRFRATDRTLTDEEANEARLQAAELAKEKFNAEMRG</sequence>
<feature type="chain" id="PRO_0000126875" description="Phenylalanine--tRNA ligase beta subunit">
    <location>
        <begin position="1"/>
        <end position="835"/>
    </location>
</feature>
<feature type="domain" description="tRNA-binding" evidence="1">
    <location>
        <begin position="44"/>
        <end position="160"/>
    </location>
</feature>
<feature type="domain" description="B5" evidence="1">
    <location>
        <begin position="419"/>
        <end position="494"/>
    </location>
</feature>
<feature type="domain" description="FDX-ACB" evidence="1">
    <location>
        <begin position="741"/>
        <end position="834"/>
    </location>
</feature>
<feature type="binding site" evidence="1">
    <location>
        <position position="472"/>
    </location>
    <ligand>
        <name>Mg(2+)</name>
        <dbReference type="ChEBI" id="CHEBI:18420"/>
        <note>shared with alpha subunit</note>
    </ligand>
</feature>
<feature type="binding site" evidence="1">
    <location>
        <position position="478"/>
    </location>
    <ligand>
        <name>Mg(2+)</name>
        <dbReference type="ChEBI" id="CHEBI:18420"/>
        <note>shared with alpha subunit</note>
    </ligand>
</feature>
<feature type="binding site" evidence="1">
    <location>
        <position position="481"/>
    </location>
    <ligand>
        <name>Mg(2+)</name>
        <dbReference type="ChEBI" id="CHEBI:18420"/>
        <note>shared with alpha subunit</note>
    </ligand>
</feature>
<feature type="binding site" evidence="1">
    <location>
        <position position="482"/>
    </location>
    <ligand>
        <name>Mg(2+)</name>
        <dbReference type="ChEBI" id="CHEBI:18420"/>
        <note>shared with alpha subunit</note>
    </ligand>
</feature>
<proteinExistence type="inferred from homology"/>
<reference key="1">
    <citation type="journal article" date="2003" name="Appl. Microbiol. Biotechnol.">
        <title>The Corynebacterium glutamicum genome: features and impacts on biotechnological processes.</title>
        <authorList>
            <person name="Ikeda M."/>
            <person name="Nakagawa S."/>
        </authorList>
    </citation>
    <scope>NUCLEOTIDE SEQUENCE [LARGE SCALE GENOMIC DNA]</scope>
    <source>
        <strain>ATCC 13032 / DSM 20300 / JCM 1318 / BCRC 11384 / CCUG 27702 / LMG 3730 / NBRC 12168 / NCIMB 10025 / NRRL B-2784 / 534</strain>
    </source>
</reference>
<reference key="2">
    <citation type="journal article" date="2003" name="J. Biotechnol.">
        <title>The complete Corynebacterium glutamicum ATCC 13032 genome sequence and its impact on the production of L-aspartate-derived amino acids and vitamins.</title>
        <authorList>
            <person name="Kalinowski J."/>
            <person name="Bathe B."/>
            <person name="Bartels D."/>
            <person name="Bischoff N."/>
            <person name="Bott M."/>
            <person name="Burkovski A."/>
            <person name="Dusch N."/>
            <person name="Eggeling L."/>
            <person name="Eikmanns B.J."/>
            <person name="Gaigalat L."/>
            <person name="Goesmann A."/>
            <person name="Hartmann M."/>
            <person name="Huthmacher K."/>
            <person name="Kraemer R."/>
            <person name="Linke B."/>
            <person name="McHardy A.C."/>
            <person name="Meyer F."/>
            <person name="Moeckel B."/>
            <person name="Pfefferle W."/>
            <person name="Puehler A."/>
            <person name="Rey D.A."/>
            <person name="Rueckert C."/>
            <person name="Rupp O."/>
            <person name="Sahm H."/>
            <person name="Wendisch V.F."/>
            <person name="Wiegraebe I."/>
            <person name="Tauch A."/>
        </authorList>
    </citation>
    <scope>NUCLEOTIDE SEQUENCE [LARGE SCALE GENOMIC DNA]</scope>
    <source>
        <strain>ATCC 13032 / DSM 20300 / JCM 1318 / BCRC 11384 / CCUG 27702 / LMG 3730 / NBRC 12168 / NCIMB 10025 / NRRL B-2784 / 534</strain>
    </source>
</reference>
<protein>
    <recommendedName>
        <fullName evidence="1">Phenylalanine--tRNA ligase beta subunit</fullName>
        <ecNumber evidence="1">6.1.1.20</ecNumber>
    </recommendedName>
    <alternativeName>
        <fullName evidence="1">Phenylalanyl-tRNA synthetase beta subunit</fullName>
        <shortName evidence="1">PheRS</shortName>
    </alternativeName>
</protein>
<organism>
    <name type="scientific">Corynebacterium glutamicum (strain ATCC 13032 / DSM 20300 / JCM 1318 / BCRC 11384 / CCUG 27702 / LMG 3730 / NBRC 12168 / NCIMB 10025 / NRRL B-2784 / 534)</name>
    <dbReference type="NCBI Taxonomy" id="196627"/>
    <lineage>
        <taxon>Bacteria</taxon>
        <taxon>Bacillati</taxon>
        <taxon>Actinomycetota</taxon>
        <taxon>Actinomycetes</taxon>
        <taxon>Mycobacteriales</taxon>
        <taxon>Corynebacteriaceae</taxon>
        <taxon>Corynebacterium</taxon>
    </lineage>
</organism>
<dbReference type="EC" id="6.1.1.20" evidence="1"/>
<dbReference type="EMBL" id="BA000036">
    <property type="protein sequence ID" value="BAB98783.1"/>
    <property type="status" value="ALT_INIT"/>
    <property type="molecule type" value="Genomic_DNA"/>
</dbReference>
<dbReference type="EMBL" id="BX927152">
    <property type="protein sequence ID" value="CAF21401.1"/>
    <property type="molecule type" value="Genomic_DNA"/>
</dbReference>
<dbReference type="RefSeq" id="NP_600609.1">
    <property type="nucleotide sequence ID" value="NC_003450.3"/>
</dbReference>
<dbReference type="RefSeq" id="WP_011014330.1">
    <property type="nucleotide sequence ID" value="NC_006958.1"/>
</dbReference>
<dbReference type="SMR" id="Q8NQN6"/>
<dbReference type="STRING" id="196627.cg1575"/>
<dbReference type="DNASU" id="3344639"/>
<dbReference type="GeneID" id="1019366"/>
<dbReference type="KEGG" id="cgb:cg1575"/>
<dbReference type="KEGG" id="cgl:Cgl1390"/>
<dbReference type="PATRIC" id="fig|196627.13.peg.1358"/>
<dbReference type="eggNOG" id="COG0072">
    <property type="taxonomic scope" value="Bacteria"/>
</dbReference>
<dbReference type="eggNOG" id="COG0073">
    <property type="taxonomic scope" value="Bacteria"/>
</dbReference>
<dbReference type="HOGENOM" id="CLU_016891_0_0_11"/>
<dbReference type="OrthoDB" id="9805455at2"/>
<dbReference type="BioCyc" id="CORYNE:G18NG-10969-MONOMER"/>
<dbReference type="Proteomes" id="UP000000582">
    <property type="component" value="Chromosome"/>
</dbReference>
<dbReference type="Proteomes" id="UP000001009">
    <property type="component" value="Chromosome"/>
</dbReference>
<dbReference type="GO" id="GO:0009328">
    <property type="term" value="C:phenylalanine-tRNA ligase complex"/>
    <property type="evidence" value="ECO:0007669"/>
    <property type="project" value="TreeGrafter"/>
</dbReference>
<dbReference type="GO" id="GO:0005524">
    <property type="term" value="F:ATP binding"/>
    <property type="evidence" value="ECO:0007669"/>
    <property type="project" value="UniProtKB-UniRule"/>
</dbReference>
<dbReference type="GO" id="GO:0000287">
    <property type="term" value="F:magnesium ion binding"/>
    <property type="evidence" value="ECO:0007669"/>
    <property type="project" value="UniProtKB-UniRule"/>
</dbReference>
<dbReference type="GO" id="GO:0004826">
    <property type="term" value="F:phenylalanine-tRNA ligase activity"/>
    <property type="evidence" value="ECO:0007669"/>
    <property type="project" value="UniProtKB-UniRule"/>
</dbReference>
<dbReference type="GO" id="GO:0000049">
    <property type="term" value="F:tRNA binding"/>
    <property type="evidence" value="ECO:0007669"/>
    <property type="project" value="UniProtKB-KW"/>
</dbReference>
<dbReference type="GO" id="GO:0006432">
    <property type="term" value="P:phenylalanyl-tRNA aminoacylation"/>
    <property type="evidence" value="ECO:0007669"/>
    <property type="project" value="UniProtKB-UniRule"/>
</dbReference>
<dbReference type="CDD" id="cd00769">
    <property type="entry name" value="PheRS_beta_core"/>
    <property type="match status" value="1"/>
</dbReference>
<dbReference type="CDD" id="cd02796">
    <property type="entry name" value="tRNA_bind_bactPheRS"/>
    <property type="match status" value="1"/>
</dbReference>
<dbReference type="FunFam" id="3.30.70.380:FF:000001">
    <property type="entry name" value="Phenylalanine--tRNA ligase beta subunit"/>
    <property type="match status" value="1"/>
</dbReference>
<dbReference type="FunFam" id="3.30.930.10:FF:000130">
    <property type="entry name" value="Phenylalanine--tRNA ligase beta subunit"/>
    <property type="match status" value="1"/>
</dbReference>
<dbReference type="Gene3D" id="3.30.56.10">
    <property type="match status" value="2"/>
</dbReference>
<dbReference type="Gene3D" id="3.30.930.10">
    <property type="entry name" value="Bira Bifunctional Protein, Domain 2"/>
    <property type="match status" value="1"/>
</dbReference>
<dbReference type="Gene3D" id="3.30.70.380">
    <property type="entry name" value="Ferrodoxin-fold anticodon-binding domain"/>
    <property type="match status" value="1"/>
</dbReference>
<dbReference type="Gene3D" id="2.40.50.140">
    <property type="entry name" value="Nucleic acid-binding proteins"/>
    <property type="match status" value="1"/>
</dbReference>
<dbReference type="Gene3D" id="3.50.40.10">
    <property type="entry name" value="Phenylalanyl-trna Synthetase, Chain B, domain 3"/>
    <property type="match status" value="1"/>
</dbReference>
<dbReference type="HAMAP" id="MF_00283">
    <property type="entry name" value="Phe_tRNA_synth_beta1"/>
    <property type="match status" value="1"/>
</dbReference>
<dbReference type="InterPro" id="IPR045864">
    <property type="entry name" value="aa-tRNA-synth_II/BPL/LPL"/>
</dbReference>
<dbReference type="InterPro" id="IPR005146">
    <property type="entry name" value="B3/B4_tRNA-bd"/>
</dbReference>
<dbReference type="InterPro" id="IPR009061">
    <property type="entry name" value="DNA-bd_dom_put_sf"/>
</dbReference>
<dbReference type="InterPro" id="IPR005121">
    <property type="entry name" value="Fdx_antiC-bd"/>
</dbReference>
<dbReference type="InterPro" id="IPR036690">
    <property type="entry name" value="Fdx_antiC-bd_sf"/>
</dbReference>
<dbReference type="InterPro" id="IPR012340">
    <property type="entry name" value="NA-bd_OB-fold"/>
</dbReference>
<dbReference type="InterPro" id="IPR045060">
    <property type="entry name" value="Phe-tRNA-ligase_IIc_bsu"/>
</dbReference>
<dbReference type="InterPro" id="IPR004532">
    <property type="entry name" value="Phe-tRNA-ligase_IIc_bsu_bact"/>
</dbReference>
<dbReference type="InterPro" id="IPR020825">
    <property type="entry name" value="Phe-tRNA_synthase-like_B3/B4"/>
</dbReference>
<dbReference type="InterPro" id="IPR041616">
    <property type="entry name" value="PheRS_beta_core"/>
</dbReference>
<dbReference type="InterPro" id="IPR002547">
    <property type="entry name" value="tRNA-bd_dom"/>
</dbReference>
<dbReference type="InterPro" id="IPR033714">
    <property type="entry name" value="tRNA_bind_bactPheRS"/>
</dbReference>
<dbReference type="InterPro" id="IPR005147">
    <property type="entry name" value="tRNA_synthase_B5-dom"/>
</dbReference>
<dbReference type="NCBIfam" id="TIGR00472">
    <property type="entry name" value="pheT_bact"/>
    <property type="match status" value="1"/>
</dbReference>
<dbReference type="PANTHER" id="PTHR10947:SF0">
    <property type="entry name" value="PHENYLALANINE--TRNA LIGASE BETA SUBUNIT"/>
    <property type="match status" value="1"/>
</dbReference>
<dbReference type="PANTHER" id="PTHR10947">
    <property type="entry name" value="PHENYLALANYL-TRNA SYNTHETASE BETA CHAIN AND LEUCINE-RICH REPEAT-CONTAINING PROTEIN 47"/>
    <property type="match status" value="1"/>
</dbReference>
<dbReference type="Pfam" id="PF03483">
    <property type="entry name" value="B3_4"/>
    <property type="match status" value="1"/>
</dbReference>
<dbReference type="Pfam" id="PF03484">
    <property type="entry name" value="B5"/>
    <property type="match status" value="1"/>
</dbReference>
<dbReference type="Pfam" id="PF03147">
    <property type="entry name" value="FDX-ACB"/>
    <property type="match status" value="1"/>
</dbReference>
<dbReference type="Pfam" id="PF01588">
    <property type="entry name" value="tRNA_bind"/>
    <property type="match status" value="1"/>
</dbReference>
<dbReference type="Pfam" id="PF17759">
    <property type="entry name" value="tRNA_synthFbeta"/>
    <property type="match status" value="1"/>
</dbReference>
<dbReference type="SMART" id="SM00873">
    <property type="entry name" value="B3_4"/>
    <property type="match status" value="1"/>
</dbReference>
<dbReference type="SMART" id="SM00874">
    <property type="entry name" value="B5"/>
    <property type="match status" value="1"/>
</dbReference>
<dbReference type="SMART" id="SM00896">
    <property type="entry name" value="FDX-ACB"/>
    <property type="match status" value="1"/>
</dbReference>
<dbReference type="SUPFAM" id="SSF54991">
    <property type="entry name" value="Anticodon-binding domain of PheRS"/>
    <property type="match status" value="1"/>
</dbReference>
<dbReference type="SUPFAM" id="SSF55681">
    <property type="entry name" value="Class II aaRS and biotin synthetases"/>
    <property type="match status" value="1"/>
</dbReference>
<dbReference type="SUPFAM" id="SSF50249">
    <property type="entry name" value="Nucleic acid-binding proteins"/>
    <property type="match status" value="1"/>
</dbReference>
<dbReference type="SUPFAM" id="SSF56037">
    <property type="entry name" value="PheT/TilS domain"/>
    <property type="match status" value="1"/>
</dbReference>
<dbReference type="SUPFAM" id="SSF46955">
    <property type="entry name" value="Putative DNA-binding domain"/>
    <property type="match status" value="1"/>
</dbReference>
<dbReference type="PROSITE" id="PS51483">
    <property type="entry name" value="B5"/>
    <property type="match status" value="1"/>
</dbReference>
<dbReference type="PROSITE" id="PS51447">
    <property type="entry name" value="FDX_ACB"/>
    <property type="match status" value="1"/>
</dbReference>
<dbReference type="PROSITE" id="PS50886">
    <property type="entry name" value="TRBD"/>
    <property type="match status" value="1"/>
</dbReference>
<name>SYFB_CORGL</name>
<accession>Q8NQN6</accession>
<evidence type="ECO:0000255" key="1">
    <source>
        <dbReference type="HAMAP-Rule" id="MF_00283"/>
    </source>
</evidence>
<evidence type="ECO:0000305" key="2"/>